<dbReference type="EMBL" id="AF448801">
    <property type="protein sequence ID" value="AAM73808.1"/>
    <property type="molecule type" value="mRNA"/>
</dbReference>
<dbReference type="EMBL" id="AF465820">
    <property type="protein sequence ID" value="AAL75985.1"/>
    <property type="molecule type" value="mRNA"/>
</dbReference>
<dbReference type="EMBL" id="AK023149">
    <property type="protein sequence ID" value="BAB14431.1"/>
    <property type="molecule type" value="mRNA"/>
</dbReference>
<dbReference type="EMBL" id="CH471178">
    <property type="protein sequence ID" value="EAW51581.1"/>
    <property type="molecule type" value="Genomic_DNA"/>
</dbReference>
<dbReference type="EMBL" id="CH471178">
    <property type="protein sequence ID" value="EAW51584.1"/>
    <property type="molecule type" value="Genomic_DNA"/>
</dbReference>
<dbReference type="EMBL" id="CH471178">
    <property type="protein sequence ID" value="EAW51587.1"/>
    <property type="molecule type" value="Genomic_DNA"/>
</dbReference>
<dbReference type="EMBL" id="CH471178">
    <property type="protein sequence ID" value="EAW51582.1"/>
    <property type="molecule type" value="Genomic_DNA"/>
</dbReference>
<dbReference type="EMBL" id="CH471178">
    <property type="protein sequence ID" value="EAW51586.1"/>
    <property type="molecule type" value="Genomic_DNA"/>
</dbReference>
<dbReference type="EMBL" id="BC016158">
    <property type="protein sequence ID" value="AAH16158.1"/>
    <property type="molecule type" value="mRNA"/>
</dbReference>
<dbReference type="CCDS" id="CCDS11485.1">
    <molecule id="Q8NFT6-1"/>
</dbReference>
<dbReference type="CCDS" id="CCDS45706.2">
    <molecule id="Q8NFT6-2"/>
</dbReference>
<dbReference type="RefSeq" id="NP_079380.2">
    <molecule id="Q8NFT6-2"/>
    <property type="nucleotide sequence ID" value="NM_025104.4"/>
</dbReference>
<dbReference type="RefSeq" id="NP_663696.1">
    <molecule id="Q8NFT6-1"/>
    <property type="nucleotide sequence ID" value="NM_145663.3"/>
</dbReference>
<dbReference type="RefSeq" id="XP_006722165.1">
    <property type="nucleotide sequence ID" value="XM_006722102.3"/>
</dbReference>
<dbReference type="RefSeq" id="XP_011523583.1">
    <molecule id="Q8NFT6-3"/>
    <property type="nucleotide sequence ID" value="XM_011525281.3"/>
</dbReference>
<dbReference type="RefSeq" id="XP_054173338.1">
    <molecule id="Q8NFT6-3"/>
    <property type="nucleotide sequence ID" value="XM_054317363.1"/>
</dbReference>
<dbReference type="SMR" id="Q8NFT6"/>
<dbReference type="BioGRID" id="123157">
    <property type="interactions" value="37"/>
</dbReference>
<dbReference type="FunCoup" id="Q8NFT6">
    <property type="interactions" value="1077"/>
</dbReference>
<dbReference type="IntAct" id="Q8NFT6">
    <property type="interactions" value="31"/>
</dbReference>
<dbReference type="MINT" id="Q8NFT6"/>
<dbReference type="STRING" id="9606.ENSP00000323663"/>
<dbReference type="GlyGen" id="Q8NFT6">
    <property type="glycosylation" value="1 site, 1 O-linked glycan (1 site)"/>
</dbReference>
<dbReference type="iPTMnet" id="Q8NFT6"/>
<dbReference type="PhosphoSitePlus" id="Q8NFT6"/>
<dbReference type="BioMuta" id="DBF4B"/>
<dbReference type="DMDM" id="74715595"/>
<dbReference type="jPOST" id="Q8NFT6"/>
<dbReference type="MassIVE" id="Q8NFT6"/>
<dbReference type="PaxDb" id="9606-ENSP00000323663"/>
<dbReference type="PeptideAtlas" id="Q8NFT6"/>
<dbReference type="ProteomicsDB" id="73350">
    <molecule id="Q8NFT6-1"/>
</dbReference>
<dbReference type="ProteomicsDB" id="73351">
    <molecule id="Q8NFT6-2"/>
</dbReference>
<dbReference type="ProteomicsDB" id="73352">
    <molecule id="Q8NFT6-3"/>
</dbReference>
<dbReference type="ProteomicsDB" id="73353">
    <molecule id="Q8NFT6-4"/>
</dbReference>
<dbReference type="Antibodypedia" id="29863">
    <property type="antibodies" value="136 antibodies from 21 providers"/>
</dbReference>
<dbReference type="DNASU" id="80174"/>
<dbReference type="Ensembl" id="ENST00000315005.8">
    <molecule id="Q8NFT6-1"/>
    <property type="protein sequence ID" value="ENSP00000323663.3"/>
    <property type="gene ID" value="ENSG00000161692.18"/>
</dbReference>
<dbReference type="Ensembl" id="ENST00000393547.6">
    <molecule id="Q8NFT6-2"/>
    <property type="protein sequence ID" value="ENSP00000377178.2"/>
    <property type="gene ID" value="ENSG00000161692.18"/>
</dbReference>
<dbReference type="GeneID" id="80174"/>
<dbReference type="KEGG" id="hsa:80174"/>
<dbReference type="MANE-Select" id="ENST00000315005.8">
    <property type="protein sequence ID" value="ENSP00000323663.3"/>
    <property type="RefSeq nucleotide sequence ID" value="NM_145663.3"/>
    <property type="RefSeq protein sequence ID" value="NP_663696.1"/>
</dbReference>
<dbReference type="UCSC" id="uc002ihf.4">
    <molecule id="Q8NFT6-1"/>
    <property type="organism name" value="human"/>
</dbReference>
<dbReference type="AGR" id="HGNC:17883"/>
<dbReference type="CTD" id="80174"/>
<dbReference type="DisGeNET" id="80174"/>
<dbReference type="GeneCards" id="DBF4B"/>
<dbReference type="HGNC" id="HGNC:17883">
    <property type="gene designation" value="DBF4B"/>
</dbReference>
<dbReference type="HPA" id="ENSG00000161692">
    <property type="expression patterns" value="Low tissue specificity"/>
</dbReference>
<dbReference type="MIM" id="611661">
    <property type="type" value="gene"/>
</dbReference>
<dbReference type="neXtProt" id="NX_Q8NFT6"/>
<dbReference type="OpenTargets" id="ENSG00000161692"/>
<dbReference type="PharmGKB" id="PA143485447"/>
<dbReference type="VEuPathDB" id="HostDB:ENSG00000161692"/>
<dbReference type="eggNOG" id="KOG4139">
    <property type="taxonomic scope" value="Eukaryota"/>
</dbReference>
<dbReference type="GeneTree" id="ENSGT00530000063909"/>
<dbReference type="HOGENOM" id="CLU_030726_1_1_1"/>
<dbReference type="InParanoid" id="Q8NFT6"/>
<dbReference type="OMA" id="PASCTCQ"/>
<dbReference type="OrthoDB" id="21380at2759"/>
<dbReference type="PAN-GO" id="Q8NFT6">
    <property type="GO annotations" value="5 GO annotations based on evolutionary models"/>
</dbReference>
<dbReference type="PhylomeDB" id="Q8NFT6"/>
<dbReference type="TreeFam" id="TF332790"/>
<dbReference type="PathwayCommons" id="Q8NFT6"/>
<dbReference type="SignaLink" id="Q8NFT6"/>
<dbReference type="BioGRID-ORCS" id="80174">
    <property type="hits" value="18 hits in 1153 CRISPR screens"/>
</dbReference>
<dbReference type="ChiTaRS" id="DBF4B">
    <property type="organism name" value="human"/>
</dbReference>
<dbReference type="GenomeRNAi" id="80174"/>
<dbReference type="Pharos" id="Q8NFT6">
    <property type="development level" value="Tbio"/>
</dbReference>
<dbReference type="PRO" id="PR:Q8NFT6"/>
<dbReference type="Proteomes" id="UP000005640">
    <property type="component" value="Chromosome 17"/>
</dbReference>
<dbReference type="RNAct" id="Q8NFT6">
    <property type="molecule type" value="protein"/>
</dbReference>
<dbReference type="Bgee" id="ENSG00000161692">
    <property type="expression patterns" value="Expressed in right testis and 114 other cell types or tissues"/>
</dbReference>
<dbReference type="ExpressionAtlas" id="Q8NFT6">
    <property type="expression patterns" value="baseline and differential"/>
</dbReference>
<dbReference type="GO" id="GO:0005737">
    <property type="term" value="C:cytoplasm"/>
    <property type="evidence" value="ECO:0000314"/>
    <property type="project" value="UniProtKB"/>
</dbReference>
<dbReference type="GO" id="GO:0031431">
    <property type="term" value="C:Dbf4-dependent protein kinase complex"/>
    <property type="evidence" value="ECO:0000318"/>
    <property type="project" value="GO_Central"/>
</dbReference>
<dbReference type="GO" id="GO:0043231">
    <property type="term" value="C:intracellular membrane-bounded organelle"/>
    <property type="evidence" value="ECO:0000314"/>
    <property type="project" value="HPA"/>
</dbReference>
<dbReference type="GO" id="GO:0005654">
    <property type="term" value="C:nucleoplasm"/>
    <property type="evidence" value="ECO:0000314"/>
    <property type="project" value="HPA"/>
</dbReference>
<dbReference type="GO" id="GO:0005634">
    <property type="term" value="C:nucleus"/>
    <property type="evidence" value="ECO:0000314"/>
    <property type="project" value="UniProtKB"/>
</dbReference>
<dbReference type="GO" id="GO:0003676">
    <property type="term" value="F:nucleic acid binding"/>
    <property type="evidence" value="ECO:0007669"/>
    <property type="project" value="InterPro"/>
</dbReference>
<dbReference type="GO" id="GO:0030295">
    <property type="term" value="F:protein kinase activator activity"/>
    <property type="evidence" value="ECO:0000314"/>
    <property type="project" value="UniProtKB"/>
</dbReference>
<dbReference type="GO" id="GO:0019901">
    <property type="term" value="F:protein kinase binding"/>
    <property type="evidence" value="ECO:0000353"/>
    <property type="project" value="UniProtKB"/>
</dbReference>
<dbReference type="GO" id="GO:0043539">
    <property type="term" value="F:protein serine/threonine kinase activator activity"/>
    <property type="evidence" value="ECO:0000318"/>
    <property type="project" value="GO_Central"/>
</dbReference>
<dbReference type="GO" id="GO:0008270">
    <property type="term" value="F:zinc ion binding"/>
    <property type="evidence" value="ECO:0007669"/>
    <property type="project" value="UniProtKB-KW"/>
</dbReference>
<dbReference type="GO" id="GO:0008284">
    <property type="term" value="P:positive regulation of cell population proliferation"/>
    <property type="evidence" value="ECO:0000315"/>
    <property type="project" value="UniProtKB"/>
</dbReference>
<dbReference type="GO" id="GO:0010971">
    <property type="term" value="P:positive regulation of G2/M transition of mitotic cell cycle"/>
    <property type="evidence" value="ECO:0000315"/>
    <property type="project" value="UniProtKB"/>
</dbReference>
<dbReference type="GO" id="GO:0010571">
    <property type="term" value="P:positive regulation of nuclear cell cycle DNA replication"/>
    <property type="evidence" value="ECO:0000315"/>
    <property type="project" value="UniProtKB"/>
</dbReference>
<dbReference type="GO" id="GO:1901987">
    <property type="term" value="P:regulation of cell cycle phase transition"/>
    <property type="evidence" value="ECO:0000318"/>
    <property type="project" value="GO_Central"/>
</dbReference>
<dbReference type="FunFam" id="6.10.250.3410:FF:000001">
    <property type="entry name" value="Protein DBF4 homolog A"/>
    <property type="match status" value="1"/>
</dbReference>
<dbReference type="Gene3D" id="6.10.250.3410">
    <property type="entry name" value="DBF zinc finger"/>
    <property type="match status" value="1"/>
</dbReference>
<dbReference type="InterPro" id="IPR051590">
    <property type="entry name" value="Replication_Regulatory_Kinase"/>
</dbReference>
<dbReference type="InterPro" id="IPR006572">
    <property type="entry name" value="Znf_DBF"/>
</dbReference>
<dbReference type="InterPro" id="IPR038545">
    <property type="entry name" value="Znf_DBF_sf"/>
</dbReference>
<dbReference type="PANTHER" id="PTHR15375">
    <property type="entry name" value="ACTIVATOR OF S-PHASE KINASE-RELATED"/>
    <property type="match status" value="1"/>
</dbReference>
<dbReference type="PANTHER" id="PTHR15375:SF24">
    <property type="entry name" value="PROTEIN DBF4 HOMOLOG B"/>
    <property type="match status" value="1"/>
</dbReference>
<dbReference type="Pfam" id="PF07535">
    <property type="entry name" value="zf-DBF"/>
    <property type="match status" value="1"/>
</dbReference>
<dbReference type="SMART" id="SM00586">
    <property type="entry name" value="ZnF_DBF"/>
    <property type="match status" value="1"/>
</dbReference>
<dbReference type="PROSITE" id="PS51265">
    <property type="entry name" value="ZF_DBF4"/>
    <property type="match status" value="1"/>
</dbReference>
<comment type="function">
    <text evidence="3 4 5">Regulatory subunit for CDC7 which activates its kinase activity thereby playing a central role in DNA replication and cell proliferation. Required for progression of S and M phases. The complex CDC7-DBF4B selectively phosphorylates MCM2 subunit at 'Ser-40' and then is involved in regulating the initiation of DNA replication during cell cycle.</text>
</comment>
<comment type="subunit">
    <text>Forms a complex with CDC7. Note that CDC7 forms distinct complex either with DBF4/DBF4A or DBF4B. Such complexes are stable upon replication stress.</text>
</comment>
<comment type="interaction">
    <interactant intactId="EBI-749662">
        <id>Q8NFT6</id>
    </interactant>
    <interactant intactId="EBI-739696">
        <id>P25791</id>
        <label>LMO2</label>
    </interactant>
    <organismsDiffer>false</organismsDiffer>
    <experiments>3</experiments>
</comment>
<comment type="interaction">
    <interactant intactId="EBI-12205861">
        <id>Q8NFT6-2</id>
    </interactant>
    <interactant intactId="EBI-3867333">
        <id>A8MQ03</id>
        <label>CYSRT1</label>
    </interactant>
    <organismsDiffer>false</organismsDiffer>
    <experiments>3</experiments>
</comment>
<comment type="interaction">
    <interactant intactId="EBI-12205861">
        <id>Q8NFT6-2</id>
    </interactant>
    <interactant intactId="EBI-744104">
        <id>P55040</id>
        <label>GEM</label>
    </interactant>
    <organismsDiffer>false</organismsDiffer>
    <experiments>3</experiments>
</comment>
<comment type="interaction">
    <interactant intactId="EBI-12205861">
        <id>Q8NFT6-2</id>
    </interactant>
    <interactant intactId="EBI-5460660">
        <id>Q96MH2</id>
        <label>HEXIM2</label>
    </interactant>
    <organismsDiffer>false</organismsDiffer>
    <experiments>3</experiments>
</comment>
<comment type="interaction">
    <interactant intactId="EBI-12205861">
        <id>Q8NFT6-2</id>
    </interactant>
    <interactant intactId="EBI-724076">
        <id>Q99750</id>
        <label>MDFI</label>
    </interactant>
    <organismsDiffer>false</organismsDiffer>
    <experiments>3</experiments>
</comment>
<comment type="interaction">
    <interactant intactId="EBI-12205861">
        <id>Q8NFT6-2</id>
    </interactant>
    <interactant intactId="EBI-11956269">
        <id>Q92824-2</id>
        <label>PCSK5</label>
    </interactant>
    <organismsDiffer>false</organismsDiffer>
    <experiments>3</experiments>
</comment>
<comment type="interaction">
    <interactant intactId="EBI-12205861">
        <id>Q8NFT6-2</id>
    </interactant>
    <interactant intactId="EBI-1378139">
        <id>Q9HAT0</id>
        <label>ROPN1</label>
    </interactant>
    <organismsDiffer>false</organismsDiffer>
    <experiments>6</experiments>
</comment>
<comment type="interaction">
    <interactant intactId="EBI-12205861">
        <id>Q8NFT6-2</id>
    </interactant>
    <interactant intactId="EBI-743117">
        <id>Q96ES7</id>
        <label>SGF29</label>
    </interactant>
    <organismsDiffer>false</organismsDiffer>
    <experiments>3</experiments>
</comment>
<comment type="interaction">
    <interactant intactId="EBI-12205861">
        <id>Q8NFT6-2</id>
    </interactant>
    <interactant intactId="EBI-5235340">
        <id>Q7Z699</id>
        <label>SPRED1</label>
    </interactant>
    <organismsDiffer>false</organismsDiffer>
    <experiments>3</experiments>
</comment>
<comment type="interaction">
    <interactant intactId="EBI-12205861">
        <id>Q8NFT6-2</id>
    </interactant>
    <interactant intactId="EBI-719493">
        <id>P14373</id>
        <label>TRIM27</label>
    </interactant>
    <organismsDiffer>false</organismsDiffer>
    <experiments>3</experiments>
</comment>
<comment type="interaction">
    <interactant intactId="EBI-12205861">
        <id>Q8NFT6-2</id>
    </interactant>
    <interactant intactId="EBI-625509">
        <id>Q8N720</id>
        <label>ZNF655</label>
    </interactant>
    <organismsDiffer>false</organismsDiffer>
    <experiments>3</experiments>
</comment>
<comment type="subcellular location">
    <subcellularLocation>
        <location evidence="3 4">Nucleus</location>
    </subcellularLocation>
    <text>Predominantly found in soluble fraction but not in the chromatin-bound fraction.</text>
</comment>
<comment type="alternative products">
    <event type="alternative splicing"/>
    <isoform>
        <id>Q8NFT6-1</id>
        <name>1</name>
        <sequence type="displayed"/>
    </isoform>
    <isoform>
        <id>Q8NFT6-2</id>
        <name>2</name>
        <sequence type="described" ref="VSP_031018 VSP_031019"/>
    </isoform>
    <isoform>
        <id>Q8NFT6-3</id>
        <name>3</name>
        <sequence type="described" ref="VSP_031014 VSP_031017"/>
    </isoform>
    <isoform>
        <id>Q8NFT6-4</id>
        <name>4</name>
        <sequence type="described" ref="VSP_031015 VSP_031016"/>
    </isoform>
</comment>
<comment type="tissue specificity">
    <text evidence="3">Widely expressed. Highly expressed in testis.</text>
</comment>
<comment type="developmental stage">
    <text evidence="3 4">Increases as cells enter in S phase through G2/M phase. The protein has a short half-life (at protein level).</text>
</comment>
<comment type="PTM">
    <text evidence="3">Phosphorylated.</text>
</comment>
<gene>
    <name type="primary">DBF4B</name>
    <name type="synonym">ASKL1</name>
    <name type="synonym">DRF1</name>
</gene>
<organism>
    <name type="scientific">Homo sapiens</name>
    <name type="common">Human</name>
    <dbReference type="NCBI Taxonomy" id="9606"/>
    <lineage>
        <taxon>Eukaryota</taxon>
        <taxon>Metazoa</taxon>
        <taxon>Chordata</taxon>
        <taxon>Craniata</taxon>
        <taxon>Vertebrata</taxon>
        <taxon>Euteleostomi</taxon>
        <taxon>Mammalia</taxon>
        <taxon>Eutheria</taxon>
        <taxon>Euarchontoglires</taxon>
        <taxon>Primates</taxon>
        <taxon>Haplorrhini</taxon>
        <taxon>Catarrhini</taxon>
        <taxon>Hominidae</taxon>
        <taxon>Homo</taxon>
    </lineage>
</organism>
<accession>Q8NFT6</accession>
<accession>D3DX56</accession>
<accession>Q8TEX0</accession>
<accession>Q96B19</accession>
<accession>Q9H912</accession>
<keyword id="KW-0025">Alternative splicing</keyword>
<keyword id="KW-0131">Cell cycle</keyword>
<keyword id="KW-0479">Metal-binding</keyword>
<keyword id="KW-0539">Nucleus</keyword>
<keyword id="KW-0597">Phosphoprotein</keyword>
<keyword id="KW-1267">Proteomics identification</keyword>
<keyword id="KW-1185">Reference proteome</keyword>
<keyword id="KW-0862">Zinc</keyword>
<keyword id="KW-0863">Zinc-finger</keyword>
<name>DBF4B_HUMAN</name>
<feature type="chain" id="PRO_0000317553" description="Protein DBF4 homolog B">
    <location>
        <begin position="1"/>
        <end position="615"/>
    </location>
</feature>
<feature type="domain" description="BRCT">
    <location>
        <begin position="43"/>
        <end position="133"/>
    </location>
</feature>
<feature type="zinc finger region" description="DBF4-type" evidence="1">
    <location>
        <begin position="294"/>
        <end position="343"/>
    </location>
</feature>
<feature type="region of interest" description="Disordered" evidence="2">
    <location>
        <begin position="93"/>
        <end position="141"/>
    </location>
</feature>
<feature type="region of interest" description="Disordered" evidence="2">
    <location>
        <begin position="264"/>
        <end position="293"/>
    </location>
</feature>
<feature type="region of interest" description="Disordered" evidence="2">
    <location>
        <begin position="371"/>
        <end position="407"/>
    </location>
</feature>
<feature type="compositionally biased region" description="Basic and acidic residues" evidence="2">
    <location>
        <begin position="275"/>
        <end position="284"/>
    </location>
</feature>
<feature type="binding site" evidence="1">
    <location>
        <position position="301"/>
    </location>
    <ligand>
        <name>Zn(2+)</name>
        <dbReference type="ChEBI" id="CHEBI:29105"/>
    </ligand>
</feature>
<feature type="binding site" evidence="1">
    <location>
        <position position="304"/>
    </location>
    <ligand>
        <name>Zn(2+)</name>
        <dbReference type="ChEBI" id="CHEBI:29105"/>
    </ligand>
</feature>
<feature type="binding site" evidence="1">
    <location>
        <position position="314"/>
    </location>
    <ligand>
        <name>Zn(2+)</name>
        <dbReference type="ChEBI" id="CHEBI:29105"/>
    </ligand>
</feature>
<feature type="binding site" evidence="1">
    <location>
        <position position="320"/>
    </location>
    <ligand>
        <name>Zn(2+)</name>
        <dbReference type="ChEBI" id="CHEBI:29105"/>
    </ligand>
</feature>
<feature type="splice variant" id="VSP_031014" description="In isoform 3." evidence="8">
    <location>
        <begin position="1"/>
        <end position="186"/>
    </location>
</feature>
<feature type="splice variant" id="VSP_031015" description="In isoform 4." evidence="6">
    <original>GSISGGGSGGSSSL</original>
    <variation>VSWGKMGQSRWSPA</variation>
    <location>
        <begin position="157"/>
        <end position="170"/>
    </location>
</feature>
<feature type="splice variant" id="VSP_031016" description="In isoform 4." evidence="6">
    <location>
        <begin position="171"/>
        <end position="615"/>
    </location>
</feature>
<feature type="splice variant" id="VSP_031017" description="In isoform 3." evidence="8">
    <original>VTQGRAAGQQRWTESLDGVMGPPASHTCVSATTLLPALPKGSREQGCLCPCPASFTQSHLVTSLALLPGEWSPAEDMPLHPSQENSFAPADIPVKGPLLFPEARPWLMSARCWVRPFPFVTWGCLIPHDTTPLHEEVSPCPCLRLGYLYLLLTQSLWCRVRVPSLSTAGPIPRTSHPCTLAFPSYLNDHDLGHLCQAKPQGWNTPQPFLHCGFLAVDSG</original>
    <variation>GIPEQDGTVDSTQAPAERAGTGEVPGPIASCQDLGVSVDVFVDPPGIPVSRSPACQCLLPSSGFMELSSGPDLALFGHKRKVQFPSGSAKKRVGASWPQASFFVPIAPNPCGTRTTSGKRLPSLPLTGHESRLLASLQPLCHSQTCLSLPDPFPWQPTDRPAEFWATQPSWLGKGWPPGPEDSECTATGPVSQEAGQLLSCPTAPGWPSAPLYSATSVQPSGAPVESRSTSLLQPLPASAGASCSRCLWAPQPLQVPCLPVSQPWSQPQPQPQPHAGRELLLRVPKVLGSSQGQAAPD</variation>
    <location>
        <begin position="397"/>
        <end position="615"/>
    </location>
</feature>
<feature type="splice variant" id="VSP_031018" description="In isoform 2." evidence="7">
    <original>VSATTLL</original>
    <variation>HRPCRLP</variation>
    <location>
        <begin position="425"/>
        <end position="431"/>
    </location>
</feature>
<feature type="splice variant" id="VSP_031019" description="In isoform 2." evidence="7">
    <location>
        <begin position="432"/>
        <end position="615"/>
    </location>
</feature>
<feature type="sequence conflict" description="In Ref. 2; AAL75985." evidence="9" ref="2">
    <original>K</original>
    <variation>R</variation>
    <location>
        <position position="207"/>
    </location>
</feature>
<feature type="sequence conflict" description="In Ref. 2; AAL75985." evidence="9" ref="2">
    <original>G</original>
    <variation>D</variation>
    <location>
        <position position="352"/>
    </location>
</feature>
<proteinExistence type="evidence at protein level"/>
<protein>
    <recommendedName>
        <fullName>Protein DBF4 homolog B</fullName>
    </recommendedName>
    <alternativeName>
        <fullName>Activator of S phase kinase-like protein 1</fullName>
        <shortName>ASK-like protein 1</shortName>
    </alternativeName>
    <alternativeName>
        <fullName>Chiffon homolog B</fullName>
    </alternativeName>
    <alternativeName>
        <fullName>Dbf4-related factor 1</fullName>
    </alternativeName>
</protein>
<evidence type="ECO:0000255" key="1">
    <source>
        <dbReference type="PROSITE-ProRule" id="PRU00600"/>
    </source>
</evidence>
<evidence type="ECO:0000256" key="2">
    <source>
        <dbReference type="SAM" id="MobiDB-lite"/>
    </source>
</evidence>
<evidence type="ECO:0000269" key="3">
    <source>
    </source>
</evidence>
<evidence type="ECO:0000269" key="4">
    <source>
    </source>
</evidence>
<evidence type="ECO:0000269" key="5">
    <source>
    </source>
</evidence>
<evidence type="ECO:0000303" key="6">
    <source>
    </source>
</evidence>
<evidence type="ECO:0000303" key="7">
    <source>
    </source>
</evidence>
<evidence type="ECO:0000303" key="8">
    <source ref="2"/>
</evidence>
<evidence type="ECO:0000305" key="9"/>
<reference key="1">
    <citation type="journal article" date="2002" name="EMBO J.">
        <title>Drf1, a novel regulatory subunit for human Cdc7 kinase.</title>
        <authorList>
            <person name="Montagnoli A."/>
            <person name="Bosotti R."/>
            <person name="Villa F."/>
            <person name="Rialland M."/>
            <person name="Brotherton D."/>
            <person name="Mercurio C."/>
            <person name="Berthelsen J."/>
            <person name="Santocanale C."/>
        </authorList>
    </citation>
    <scope>NUCLEOTIDE SEQUENCE [MRNA] (ISOFORM 1)</scope>
    <scope>FUNCTION</scope>
    <scope>SUBCELLULAR LOCATION</scope>
    <scope>PHOSPHORYLATION</scope>
    <scope>TISSUE SPECIFICITY</scope>
    <scope>DEVELOPMENTAL STAGE</scope>
    <scope>INTERACTION WITH CDC7</scope>
</reference>
<reference key="2">
    <citation type="submission" date="2002-01" db="EMBL/GenBank/DDBJ databases">
        <authorList>
            <person name="Shannon M."/>
        </authorList>
    </citation>
    <scope>NUCLEOTIDE SEQUENCE [MRNA] (ISOFORM 3)</scope>
</reference>
<reference key="3">
    <citation type="journal article" date="2004" name="Nat. Genet.">
        <title>Complete sequencing and characterization of 21,243 full-length human cDNAs.</title>
        <authorList>
            <person name="Ota T."/>
            <person name="Suzuki Y."/>
            <person name="Nishikawa T."/>
            <person name="Otsuki T."/>
            <person name="Sugiyama T."/>
            <person name="Irie R."/>
            <person name="Wakamatsu A."/>
            <person name="Hayashi K."/>
            <person name="Sato H."/>
            <person name="Nagai K."/>
            <person name="Kimura K."/>
            <person name="Makita H."/>
            <person name="Sekine M."/>
            <person name="Obayashi M."/>
            <person name="Nishi T."/>
            <person name="Shibahara T."/>
            <person name="Tanaka T."/>
            <person name="Ishii S."/>
            <person name="Yamamoto J."/>
            <person name="Saito K."/>
            <person name="Kawai Y."/>
            <person name="Isono Y."/>
            <person name="Nakamura Y."/>
            <person name="Nagahari K."/>
            <person name="Murakami K."/>
            <person name="Yasuda T."/>
            <person name="Iwayanagi T."/>
            <person name="Wagatsuma M."/>
            <person name="Shiratori A."/>
            <person name="Sudo H."/>
            <person name="Hosoiri T."/>
            <person name="Kaku Y."/>
            <person name="Kodaira H."/>
            <person name="Kondo H."/>
            <person name="Sugawara M."/>
            <person name="Takahashi M."/>
            <person name="Kanda K."/>
            <person name="Yokoi T."/>
            <person name="Furuya T."/>
            <person name="Kikkawa E."/>
            <person name="Omura Y."/>
            <person name="Abe K."/>
            <person name="Kamihara K."/>
            <person name="Katsuta N."/>
            <person name="Sato K."/>
            <person name="Tanikawa M."/>
            <person name="Yamazaki M."/>
            <person name="Ninomiya K."/>
            <person name="Ishibashi T."/>
            <person name="Yamashita H."/>
            <person name="Murakawa K."/>
            <person name="Fujimori K."/>
            <person name="Tanai H."/>
            <person name="Kimata M."/>
            <person name="Watanabe M."/>
            <person name="Hiraoka S."/>
            <person name="Chiba Y."/>
            <person name="Ishida S."/>
            <person name="Ono Y."/>
            <person name="Takiguchi S."/>
            <person name="Watanabe S."/>
            <person name="Yosida M."/>
            <person name="Hotuta T."/>
            <person name="Kusano J."/>
            <person name="Kanehori K."/>
            <person name="Takahashi-Fujii A."/>
            <person name="Hara H."/>
            <person name="Tanase T.-O."/>
            <person name="Nomura Y."/>
            <person name="Togiya S."/>
            <person name="Komai F."/>
            <person name="Hara R."/>
            <person name="Takeuchi K."/>
            <person name="Arita M."/>
            <person name="Imose N."/>
            <person name="Musashino K."/>
            <person name="Yuuki H."/>
            <person name="Oshima A."/>
            <person name="Sasaki N."/>
            <person name="Aotsuka S."/>
            <person name="Yoshikawa Y."/>
            <person name="Matsunawa H."/>
            <person name="Ichihara T."/>
            <person name="Shiohata N."/>
            <person name="Sano S."/>
            <person name="Moriya S."/>
            <person name="Momiyama H."/>
            <person name="Satoh N."/>
            <person name="Takami S."/>
            <person name="Terashima Y."/>
            <person name="Suzuki O."/>
            <person name="Nakagawa S."/>
            <person name="Senoh A."/>
            <person name="Mizoguchi H."/>
            <person name="Goto Y."/>
            <person name="Shimizu F."/>
            <person name="Wakebe H."/>
            <person name="Hishigaki H."/>
            <person name="Watanabe T."/>
            <person name="Sugiyama A."/>
            <person name="Takemoto M."/>
            <person name="Kawakami B."/>
            <person name="Yamazaki M."/>
            <person name="Watanabe K."/>
            <person name="Kumagai A."/>
            <person name="Itakura S."/>
            <person name="Fukuzumi Y."/>
            <person name="Fujimori Y."/>
            <person name="Komiyama M."/>
            <person name="Tashiro H."/>
            <person name="Tanigami A."/>
            <person name="Fujiwara T."/>
            <person name="Ono T."/>
            <person name="Yamada K."/>
            <person name="Fujii Y."/>
            <person name="Ozaki K."/>
            <person name="Hirao M."/>
            <person name="Ohmori Y."/>
            <person name="Kawabata A."/>
            <person name="Hikiji T."/>
            <person name="Kobatake N."/>
            <person name="Inagaki H."/>
            <person name="Ikema Y."/>
            <person name="Okamoto S."/>
            <person name="Okitani R."/>
            <person name="Kawakami T."/>
            <person name="Noguchi S."/>
            <person name="Itoh T."/>
            <person name="Shigeta K."/>
            <person name="Senba T."/>
            <person name="Matsumura K."/>
            <person name="Nakajima Y."/>
            <person name="Mizuno T."/>
            <person name="Morinaga M."/>
            <person name="Sasaki M."/>
            <person name="Togashi T."/>
            <person name="Oyama M."/>
            <person name="Hata H."/>
            <person name="Watanabe M."/>
            <person name="Komatsu T."/>
            <person name="Mizushima-Sugano J."/>
            <person name="Satoh T."/>
            <person name="Shirai Y."/>
            <person name="Takahashi Y."/>
            <person name="Nakagawa K."/>
            <person name="Okumura K."/>
            <person name="Nagase T."/>
            <person name="Nomura N."/>
            <person name="Kikuchi H."/>
            <person name="Masuho Y."/>
            <person name="Yamashita R."/>
            <person name="Nakai K."/>
            <person name="Yada T."/>
            <person name="Nakamura Y."/>
            <person name="Ohara O."/>
            <person name="Isogai T."/>
            <person name="Sugano S."/>
        </authorList>
    </citation>
    <scope>NUCLEOTIDE SEQUENCE [LARGE SCALE MRNA] (ISOFORM 4)</scope>
</reference>
<reference key="4">
    <citation type="submission" date="2005-09" db="EMBL/GenBank/DDBJ databases">
        <authorList>
            <person name="Mural R.J."/>
            <person name="Istrail S."/>
            <person name="Sutton G.G."/>
            <person name="Florea L."/>
            <person name="Halpern A.L."/>
            <person name="Mobarry C.M."/>
            <person name="Lippert R."/>
            <person name="Walenz B."/>
            <person name="Shatkay H."/>
            <person name="Dew I."/>
            <person name="Miller J.R."/>
            <person name="Flanigan M.J."/>
            <person name="Edwards N.J."/>
            <person name="Bolanos R."/>
            <person name="Fasulo D."/>
            <person name="Halldorsson B.V."/>
            <person name="Hannenhalli S."/>
            <person name="Turner R."/>
            <person name="Yooseph S."/>
            <person name="Lu F."/>
            <person name="Nusskern D.R."/>
            <person name="Shue B.C."/>
            <person name="Zheng X.H."/>
            <person name="Zhong F."/>
            <person name="Delcher A.L."/>
            <person name="Huson D.H."/>
            <person name="Kravitz S.A."/>
            <person name="Mouchard L."/>
            <person name="Reinert K."/>
            <person name="Remington K.A."/>
            <person name="Clark A.G."/>
            <person name="Waterman M.S."/>
            <person name="Eichler E.E."/>
            <person name="Adams M.D."/>
            <person name="Hunkapiller M.W."/>
            <person name="Myers E.W."/>
            <person name="Venter J.C."/>
        </authorList>
    </citation>
    <scope>NUCLEOTIDE SEQUENCE [LARGE SCALE GENOMIC DNA]</scope>
</reference>
<reference key="5">
    <citation type="journal article" date="2004" name="Genome Res.">
        <title>The status, quality, and expansion of the NIH full-length cDNA project: the Mammalian Gene Collection (MGC).</title>
        <authorList>
            <consortium name="The MGC Project Team"/>
        </authorList>
    </citation>
    <scope>NUCLEOTIDE SEQUENCE [LARGE SCALE MRNA] (ISOFORM 2)</scope>
    <source>
        <tissue>Lung</tissue>
    </source>
</reference>
<reference key="6">
    <citation type="journal article" date="2005" name="J. Biol. Chem.">
        <title>A second human Dbf4/ASK-related protein, Drf1/ASKL1, is required for efficient progression of S and M phases.</title>
        <authorList>
            <person name="Yoshizawa-Sugata N."/>
            <person name="Ishii A."/>
            <person name="Taniyama C."/>
            <person name="Matsui E."/>
            <person name="Arai K."/>
            <person name="Masai H."/>
        </authorList>
    </citation>
    <scope>FUNCTION</scope>
    <scope>SUBCELLULAR LOCATION</scope>
    <scope>DEVELOPMENTAL STAGE</scope>
    <scope>INTERACTION WITH CDC7</scope>
</reference>
<reference key="7">
    <citation type="journal article" date="2007" name="J. Biol. Chem.">
        <title>Cdc7 is an active kinase in human cancer cells undergoing replication stress.</title>
        <authorList>
            <person name="Tenca P."/>
            <person name="Brotherton D."/>
            <person name="Montagnoli A."/>
            <person name="Rainoldi S."/>
            <person name="Albanese C."/>
            <person name="Santocanale C."/>
        </authorList>
    </citation>
    <scope>FUNCTION</scope>
    <scope>INTERACTION WITH CDC7</scope>
</reference>
<sequence length="615" mass="67243">MSEPGKGDDCLELESSMAESRLRAPDLGVSRCLGKCQKNSPGARKHPFSGKSFYLDLPAGKNLQFLTGAIQQLGGVIEGFLSKEVSYIVSSRREVKAESSGKSHRGCPSPSPSEVRVETSAMVDPKGSHPRPSRKPVDSVPLSRGKELLQKAIRNQGSISGGGSGGSSSLLTNARSWGVRILHVDEMMMHVQQLSLASLCVKKQQPKKPEGTCPAAESRTRKVARLKAPFLKIEDESRKFRPFHHQFKSFPEISFLGPKDASPFEAPTTLGSMHHTRESKDGEPSPRSAAHTMPRRKKGYCECCQEAFEELHVHLQSAQHRSFALEAHLYAEVDRIIAQLSHSFADIPFQAGLPRWSGSPASDCDPLCPETLHPHQPSHPRAASPRIRKEDSCQASVTQGRAAGQQRWTESLDGVMGPPASHTCVSATTLLPALPKGSREQGCLCPCPASFTQSHLVTSLALLPGEWSPAEDMPLHPSQENSFAPADIPVKGPLLFPEARPWLMSARCWVRPFPFVTWGCLIPHDTTPLHEEVSPCPCLRLGYLYLLLTQSLWCRVRVPSLSTAGPIPRTSHPCTLAFPSYLNDHDLGHLCQAKPQGWNTPQPFLHCGFLAVDSG</sequence>